<feature type="chain" id="PRO_1000015172" description="S-adenosylmethionine:tRNA ribosyltransferase-isomerase">
    <location>
        <begin position="1"/>
        <end position="355"/>
    </location>
</feature>
<name>QUEA_AERS4</name>
<keyword id="KW-0963">Cytoplasm</keyword>
<keyword id="KW-0671">Queuosine biosynthesis</keyword>
<keyword id="KW-0949">S-adenosyl-L-methionine</keyword>
<keyword id="KW-0808">Transferase</keyword>
<evidence type="ECO:0000255" key="1">
    <source>
        <dbReference type="HAMAP-Rule" id="MF_00113"/>
    </source>
</evidence>
<protein>
    <recommendedName>
        <fullName evidence="1">S-adenosylmethionine:tRNA ribosyltransferase-isomerase</fullName>
        <ecNumber evidence="1">2.4.99.17</ecNumber>
    </recommendedName>
    <alternativeName>
        <fullName evidence="1">Queuosine biosynthesis protein QueA</fullName>
    </alternativeName>
</protein>
<comment type="function">
    <text evidence="1">Transfers and isomerizes the ribose moiety from AdoMet to the 7-aminomethyl group of 7-deazaguanine (preQ1-tRNA) to give epoxyqueuosine (oQ-tRNA).</text>
</comment>
<comment type="catalytic activity">
    <reaction evidence="1">
        <text>7-aminomethyl-7-carbaguanosine(34) in tRNA + S-adenosyl-L-methionine = epoxyqueuosine(34) in tRNA + adenine + L-methionine + 2 H(+)</text>
        <dbReference type="Rhea" id="RHEA:32155"/>
        <dbReference type="Rhea" id="RHEA-COMP:10342"/>
        <dbReference type="Rhea" id="RHEA-COMP:18582"/>
        <dbReference type="ChEBI" id="CHEBI:15378"/>
        <dbReference type="ChEBI" id="CHEBI:16708"/>
        <dbReference type="ChEBI" id="CHEBI:57844"/>
        <dbReference type="ChEBI" id="CHEBI:59789"/>
        <dbReference type="ChEBI" id="CHEBI:82833"/>
        <dbReference type="ChEBI" id="CHEBI:194443"/>
        <dbReference type="EC" id="2.4.99.17"/>
    </reaction>
</comment>
<comment type="pathway">
    <text evidence="1">tRNA modification; tRNA-queuosine biosynthesis.</text>
</comment>
<comment type="subunit">
    <text evidence="1">Monomer.</text>
</comment>
<comment type="subcellular location">
    <subcellularLocation>
        <location evidence="1">Cytoplasm</location>
    </subcellularLocation>
</comment>
<comment type="similarity">
    <text evidence="1">Belongs to the QueA family.</text>
</comment>
<sequence length="355" mass="39157">MQVSDFHFDLPDELIARYPMAERTASRLLQLDGQSGALRHGQFVDVLDQLNPGDLLVFNNTRVIPARMFGQKASGGKLEVLVERILDEHSVLAHVRASKAPKPGTRLILDGGPDGEKVDAEMRARHDALFEIHFLDPRPVLEILEAIGHMPLPPYIDRPDEDADKERYQTVYNQKPGAVAAPTAGLHFDEPLLAKIRAKGVETAFVTLHVGAGTFQPVRVDKIEDHHMHSEYAEVPQEVVDAIAATRARGGRVIAVGTTSVRSLESAAKASLALSKPLAPFFSDTDIFIFPGYQFQVVDAMVTNFHLPESTLIMLVSAFAGYDHVMAAYQAAVAEQYRFFSYGDAMFVTRRRAVA</sequence>
<dbReference type="EC" id="2.4.99.17" evidence="1"/>
<dbReference type="EMBL" id="CP000644">
    <property type="protein sequence ID" value="ABO90649.1"/>
    <property type="molecule type" value="Genomic_DNA"/>
</dbReference>
<dbReference type="RefSeq" id="WP_005310378.1">
    <property type="nucleotide sequence ID" value="NC_009348.1"/>
</dbReference>
<dbReference type="SMR" id="A4SP27"/>
<dbReference type="STRING" id="29491.GCA_000820065_00257"/>
<dbReference type="KEGG" id="asa:ASA_2625"/>
<dbReference type="eggNOG" id="COG0809">
    <property type="taxonomic scope" value="Bacteria"/>
</dbReference>
<dbReference type="HOGENOM" id="CLU_039110_1_0_6"/>
<dbReference type="UniPathway" id="UPA00392"/>
<dbReference type="Proteomes" id="UP000000225">
    <property type="component" value="Chromosome"/>
</dbReference>
<dbReference type="GO" id="GO:0005737">
    <property type="term" value="C:cytoplasm"/>
    <property type="evidence" value="ECO:0007669"/>
    <property type="project" value="UniProtKB-SubCell"/>
</dbReference>
<dbReference type="GO" id="GO:0051075">
    <property type="term" value="F:S-adenosylmethionine:tRNA ribosyltransferase-isomerase activity"/>
    <property type="evidence" value="ECO:0007669"/>
    <property type="project" value="UniProtKB-EC"/>
</dbReference>
<dbReference type="GO" id="GO:0008616">
    <property type="term" value="P:queuosine biosynthetic process"/>
    <property type="evidence" value="ECO:0007669"/>
    <property type="project" value="UniProtKB-UniRule"/>
</dbReference>
<dbReference type="GO" id="GO:0002099">
    <property type="term" value="P:tRNA wobble guanine modification"/>
    <property type="evidence" value="ECO:0007669"/>
    <property type="project" value="TreeGrafter"/>
</dbReference>
<dbReference type="FunFam" id="2.40.10.240:FF:000001">
    <property type="entry name" value="S-adenosylmethionine:tRNA ribosyltransferase-isomerase"/>
    <property type="match status" value="1"/>
</dbReference>
<dbReference type="FunFam" id="3.40.1780.10:FF:000001">
    <property type="entry name" value="S-adenosylmethionine:tRNA ribosyltransferase-isomerase"/>
    <property type="match status" value="1"/>
</dbReference>
<dbReference type="Gene3D" id="2.40.10.240">
    <property type="entry name" value="QueA-like"/>
    <property type="match status" value="1"/>
</dbReference>
<dbReference type="Gene3D" id="3.40.1780.10">
    <property type="entry name" value="QueA-like"/>
    <property type="match status" value="1"/>
</dbReference>
<dbReference type="HAMAP" id="MF_00113">
    <property type="entry name" value="QueA"/>
    <property type="match status" value="1"/>
</dbReference>
<dbReference type="InterPro" id="IPR003699">
    <property type="entry name" value="QueA"/>
</dbReference>
<dbReference type="InterPro" id="IPR042118">
    <property type="entry name" value="QueA_dom1"/>
</dbReference>
<dbReference type="InterPro" id="IPR042119">
    <property type="entry name" value="QueA_dom2"/>
</dbReference>
<dbReference type="InterPro" id="IPR036100">
    <property type="entry name" value="QueA_sf"/>
</dbReference>
<dbReference type="NCBIfam" id="NF001140">
    <property type="entry name" value="PRK00147.1"/>
    <property type="match status" value="1"/>
</dbReference>
<dbReference type="NCBIfam" id="TIGR00113">
    <property type="entry name" value="queA"/>
    <property type="match status" value="1"/>
</dbReference>
<dbReference type="PANTHER" id="PTHR30307">
    <property type="entry name" value="S-ADENOSYLMETHIONINE:TRNA RIBOSYLTRANSFERASE-ISOMERASE"/>
    <property type="match status" value="1"/>
</dbReference>
<dbReference type="PANTHER" id="PTHR30307:SF0">
    <property type="entry name" value="S-ADENOSYLMETHIONINE:TRNA RIBOSYLTRANSFERASE-ISOMERASE"/>
    <property type="match status" value="1"/>
</dbReference>
<dbReference type="Pfam" id="PF02547">
    <property type="entry name" value="Queuosine_synth"/>
    <property type="match status" value="1"/>
</dbReference>
<dbReference type="SUPFAM" id="SSF111337">
    <property type="entry name" value="QueA-like"/>
    <property type="match status" value="1"/>
</dbReference>
<gene>
    <name evidence="1" type="primary">queA</name>
    <name type="ordered locus">ASA_2625</name>
</gene>
<reference key="1">
    <citation type="journal article" date="2008" name="BMC Genomics">
        <title>The genome of Aeromonas salmonicida subsp. salmonicida A449: insights into the evolution of a fish pathogen.</title>
        <authorList>
            <person name="Reith M.E."/>
            <person name="Singh R.K."/>
            <person name="Curtis B."/>
            <person name="Boyd J.M."/>
            <person name="Bouevitch A."/>
            <person name="Kimball J."/>
            <person name="Munholland J."/>
            <person name="Murphy C."/>
            <person name="Sarty D."/>
            <person name="Williams J."/>
            <person name="Nash J.H."/>
            <person name="Johnson S.C."/>
            <person name="Brown L.L."/>
        </authorList>
    </citation>
    <scope>NUCLEOTIDE SEQUENCE [LARGE SCALE GENOMIC DNA]</scope>
    <source>
        <strain>A449</strain>
    </source>
</reference>
<accession>A4SP27</accession>
<organism>
    <name type="scientific">Aeromonas salmonicida (strain A449)</name>
    <dbReference type="NCBI Taxonomy" id="382245"/>
    <lineage>
        <taxon>Bacteria</taxon>
        <taxon>Pseudomonadati</taxon>
        <taxon>Pseudomonadota</taxon>
        <taxon>Gammaproteobacteria</taxon>
        <taxon>Aeromonadales</taxon>
        <taxon>Aeromonadaceae</taxon>
        <taxon>Aeromonas</taxon>
    </lineage>
</organism>
<proteinExistence type="inferred from homology"/>